<name>TUSD_PROMH</name>
<proteinExistence type="inferred from homology"/>
<accession>B4EYW2</accession>
<comment type="function">
    <text evidence="1">Part of a sulfur-relay system required for 2-thiolation of 5-methylaminomethyl-2-thiouridine (mnm(5)s(2)U) at tRNA wobble positions. Accepts sulfur from TusA and transfers it in turn to TusE.</text>
</comment>
<comment type="subunit">
    <text evidence="1">Heterohexamer, formed by a dimer of trimers. The hexameric TusBCD complex contains 2 copies each of TusB, TusC and TusD. The TusBCD complex interacts with TusE.</text>
</comment>
<comment type="subcellular location">
    <subcellularLocation>
        <location evidence="1">Cytoplasm</location>
    </subcellularLocation>
</comment>
<comment type="similarity">
    <text evidence="1">Belongs to the DsrE/TusD family.</text>
</comment>
<keyword id="KW-0963">Cytoplasm</keyword>
<keyword id="KW-1185">Reference proteome</keyword>
<keyword id="KW-0808">Transferase</keyword>
<keyword id="KW-0819">tRNA processing</keyword>
<dbReference type="EC" id="2.8.1.-" evidence="1"/>
<dbReference type="EMBL" id="AM942759">
    <property type="protein sequence ID" value="CAR45516.1"/>
    <property type="molecule type" value="Genomic_DNA"/>
</dbReference>
<dbReference type="RefSeq" id="WP_004246892.1">
    <property type="nucleotide sequence ID" value="NC_010554.1"/>
</dbReference>
<dbReference type="SMR" id="B4EYW2"/>
<dbReference type="EnsemblBacteria" id="CAR45516">
    <property type="protein sequence ID" value="CAR45516"/>
    <property type="gene ID" value="PMI2798"/>
</dbReference>
<dbReference type="GeneID" id="6801510"/>
<dbReference type="KEGG" id="pmr:PMI2798"/>
<dbReference type="eggNOG" id="COG1553">
    <property type="taxonomic scope" value="Bacteria"/>
</dbReference>
<dbReference type="HOGENOM" id="CLU_132095_0_0_6"/>
<dbReference type="Proteomes" id="UP000008319">
    <property type="component" value="Chromosome"/>
</dbReference>
<dbReference type="GO" id="GO:1990228">
    <property type="term" value="C:sulfurtransferase complex"/>
    <property type="evidence" value="ECO:0007669"/>
    <property type="project" value="TreeGrafter"/>
</dbReference>
<dbReference type="GO" id="GO:0097163">
    <property type="term" value="F:sulfur carrier activity"/>
    <property type="evidence" value="ECO:0007669"/>
    <property type="project" value="TreeGrafter"/>
</dbReference>
<dbReference type="GO" id="GO:0016783">
    <property type="term" value="F:sulfurtransferase activity"/>
    <property type="evidence" value="ECO:0007669"/>
    <property type="project" value="UniProtKB-UniRule"/>
</dbReference>
<dbReference type="GO" id="GO:0002143">
    <property type="term" value="P:tRNA wobble position uridine thiolation"/>
    <property type="evidence" value="ECO:0007669"/>
    <property type="project" value="TreeGrafter"/>
</dbReference>
<dbReference type="FunFam" id="3.40.1260.10:FF:000001">
    <property type="entry name" value="Sulfurtransferase TusD"/>
    <property type="match status" value="1"/>
</dbReference>
<dbReference type="Gene3D" id="3.40.1260.10">
    <property type="entry name" value="DsrEFH-like"/>
    <property type="match status" value="1"/>
</dbReference>
<dbReference type="HAMAP" id="MF_00390">
    <property type="entry name" value="Thiourid_synth_D"/>
    <property type="match status" value="1"/>
</dbReference>
<dbReference type="InterPro" id="IPR027396">
    <property type="entry name" value="DsrEFH-like"/>
</dbReference>
<dbReference type="InterPro" id="IPR003787">
    <property type="entry name" value="Sulphur_relay_DsrE/F-like"/>
</dbReference>
<dbReference type="InterPro" id="IPR017463">
    <property type="entry name" value="Sulphur_relay_TusD/DsrE"/>
</dbReference>
<dbReference type="NCBIfam" id="NF001237">
    <property type="entry name" value="PRK00207.1"/>
    <property type="match status" value="1"/>
</dbReference>
<dbReference type="NCBIfam" id="TIGR03012">
    <property type="entry name" value="sulf_tusD_dsrE"/>
    <property type="match status" value="1"/>
</dbReference>
<dbReference type="PANTHER" id="PTHR34874">
    <property type="entry name" value="PROTEIN YCHN"/>
    <property type="match status" value="1"/>
</dbReference>
<dbReference type="PANTHER" id="PTHR34874:SF3">
    <property type="entry name" value="SULFURTRANSFERASE TUSD"/>
    <property type="match status" value="1"/>
</dbReference>
<dbReference type="Pfam" id="PF02635">
    <property type="entry name" value="DsrE"/>
    <property type="match status" value="1"/>
</dbReference>
<dbReference type="SUPFAM" id="SSF75169">
    <property type="entry name" value="DsrEFH-like"/>
    <property type="match status" value="1"/>
</dbReference>
<organism>
    <name type="scientific">Proteus mirabilis (strain HI4320)</name>
    <dbReference type="NCBI Taxonomy" id="529507"/>
    <lineage>
        <taxon>Bacteria</taxon>
        <taxon>Pseudomonadati</taxon>
        <taxon>Pseudomonadota</taxon>
        <taxon>Gammaproteobacteria</taxon>
        <taxon>Enterobacterales</taxon>
        <taxon>Morganellaceae</taxon>
        <taxon>Proteus</taxon>
    </lineage>
</organism>
<evidence type="ECO:0000255" key="1">
    <source>
        <dbReference type="HAMAP-Rule" id="MF_00390"/>
    </source>
</evidence>
<feature type="chain" id="PRO_1000205816" description="Sulfurtransferase TusD">
    <location>
        <begin position="1"/>
        <end position="130"/>
    </location>
</feature>
<feature type="active site" description="Cysteine persulfide intermediate" evidence="1">
    <location>
        <position position="80"/>
    </location>
</feature>
<sequence>MNLTYCLLVTGPHYGTEQASSAYLFAKALLEKGHHIAQVFFYREGVSNANQLVSPASDEFDLPKAWIALASRYNIPLQVCVAAALRRGVVDEQQAKEQGLLSSNMATKFELSGLGALAQAMLTCDRVVQF</sequence>
<protein>
    <recommendedName>
        <fullName evidence="1">Sulfurtransferase TusD</fullName>
        <ecNumber evidence="1">2.8.1.-</ecNumber>
    </recommendedName>
    <alternativeName>
        <fullName evidence="1">tRNA 2-thiouridine synthesizing protein D</fullName>
    </alternativeName>
</protein>
<gene>
    <name evidence="1" type="primary">tusD</name>
    <name type="ordered locus">PMI2798</name>
</gene>
<reference key="1">
    <citation type="journal article" date="2008" name="J. Bacteriol.">
        <title>Complete genome sequence of uropathogenic Proteus mirabilis, a master of both adherence and motility.</title>
        <authorList>
            <person name="Pearson M.M."/>
            <person name="Sebaihia M."/>
            <person name="Churcher C."/>
            <person name="Quail M.A."/>
            <person name="Seshasayee A.S."/>
            <person name="Luscombe N.M."/>
            <person name="Abdellah Z."/>
            <person name="Arrosmith C."/>
            <person name="Atkin B."/>
            <person name="Chillingworth T."/>
            <person name="Hauser H."/>
            <person name="Jagels K."/>
            <person name="Moule S."/>
            <person name="Mungall K."/>
            <person name="Norbertczak H."/>
            <person name="Rabbinowitsch E."/>
            <person name="Walker D."/>
            <person name="Whithead S."/>
            <person name="Thomson N.R."/>
            <person name="Rather P.N."/>
            <person name="Parkhill J."/>
            <person name="Mobley H.L.T."/>
        </authorList>
    </citation>
    <scope>NUCLEOTIDE SEQUENCE [LARGE SCALE GENOMIC DNA]</scope>
    <source>
        <strain>HI4320</strain>
    </source>
</reference>